<organism>
    <name type="scientific">Danio rerio</name>
    <name type="common">Zebrafish</name>
    <name type="synonym">Brachydanio rerio</name>
    <dbReference type="NCBI Taxonomy" id="7955"/>
    <lineage>
        <taxon>Eukaryota</taxon>
        <taxon>Metazoa</taxon>
        <taxon>Chordata</taxon>
        <taxon>Craniata</taxon>
        <taxon>Vertebrata</taxon>
        <taxon>Euteleostomi</taxon>
        <taxon>Actinopterygii</taxon>
        <taxon>Neopterygii</taxon>
        <taxon>Teleostei</taxon>
        <taxon>Ostariophysi</taxon>
        <taxon>Cypriniformes</taxon>
        <taxon>Danionidae</taxon>
        <taxon>Danioninae</taxon>
        <taxon>Danio</taxon>
    </lineage>
</organism>
<keyword id="KW-1185">Reference proteome</keyword>
<reference key="1">
    <citation type="submission" date="2004-07" db="EMBL/GenBank/DDBJ databases">
        <authorList>
            <consortium name="NIH - Zebrafish Gene Collection (ZGC) project"/>
        </authorList>
    </citation>
    <scope>NUCLEOTIDE SEQUENCE [LARGE SCALE MRNA]</scope>
    <source>
        <tissue>Brain</tissue>
    </source>
</reference>
<proteinExistence type="evidence at transcript level"/>
<feature type="chain" id="PRO_0000236082" description="UBA-like domain-containing protein 1">
    <location>
        <begin position="1"/>
        <end position="155"/>
    </location>
</feature>
<feature type="region of interest" description="Disordered" evidence="1">
    <location>
        <begin position="81"/>
        <end position="155"/>
    </location>
</feature>
<feature type="compositionally biased region" description="Low complexity" evidence="1">
    <location>
        <begin position="83"/>
        <end position="96"/>
    </location>
</feature>
<feature type="compositionally biased region" description="Polar residues" evidence="1">
    <location>
        <begin position="112"/>
        <end position="127"/>
    </location>
</feature>
<feature type="compositionally biased region" description="Low complexity" evidence="1">
    <location>
        <begin position="139"/>
        <end position="155"/>
    </location>
</feature>
<dbReference type="EMBL" id="BC076320">
    <property type="protein sequence ID" value="AAH76320.1"/>
    <property type="molecule type" value="mRNA"/>
</dbReference>
<dbReference type="RefSeq" id="NP_001002488.1">
    <property type="nucleotide sequence ID" value="NM_001002488.1"/>
</dbReference>
<dbReference type="RefSeq" id="XP_009304943.1">
    <property type="nucleotide sequence ID" value="XM_009306668.2"/>
</dbReference>
<dbReference type="SMR" id="Q6DGM1"/>
<dbReference type="FunCoup" id="Q6DGM1">
    <property type="interactions" value="2045"/>
</dbReference>
<dbReference type="PaxDb" id="7955-ENSDARP00000101502"/>
<dbReference type="Ensembl" id="ENSDART00000112768">
    <property type="protein sequence ID" value="ENSDARP00000102434"/>
    <property type="gene ID" value="ENSDARG00000002362"/>
</dbReference>
<dbReference type="Ensembl" id="ENSDART00000158412">
    <property type="protein sequence ID" value="ENSDARP00000138661"/>
    <property type="gene ID" value="ENSDARG00000002362"/>
</dbReference>
<dbReference type="GeneID" id="794012"/>
<dbReference type="KEGG" id="dre:794012"/>
<dbReference type="AGR" id="ZFIN:ZDB-GENE-040718-191"/>
<dbReference type="CTD" id="794012"/>
<dbReference type="ZFIN" id="ZDB-GENE-040718-191">
    <property type="gene designation" value="ubald1a"/>
</dbReference>
<dbReference type="eggNOG" id="ENOG502S0GG">
    <property type="taxonomic scope" value="Eukaryota"/>
</dbReference>
<dbReference type="HOGENOM" id="CLU_108623_0_0_1"/>
<dbReference type="InParanoid" id="Q6DGM1"/>
<dbReference type="OMA" id="SWGMTPP"/>
<dbReference type="PhylomeDB" id="Q6DGM1"/>
<dbReference type="TreeFam" id="TF329433"/>
<dbReference type="PRO" id="PR:Q6DGM1"/>
<dbReference type="Proteomes" id="UP000000437">
    <property type="component" value="Chromosome 12"/>
</dbReference>
<dbReference type="Bgee" id="ENSDARG00000002362">
    <property type="expression patterns" value="Expressed in mature ovarian follicle and 26 other cell types or tissues"/>
</dbReference>
<dbReference type="ExpressionAtlas" id="Q6DGM1">
    <property type="expression patterns" value="baseline and differential"/>
</dbReference>
<dbReference type="CDD" id="cd14343">
    <property type="entry name" value="UBA_F100B_like"/>
    <property type="match status" value="1"/>
</dbReference>
<dbReference type="Gene3D" id="1.10.8.10">
    <property type="entry name" value="DNA helicase RuvA subunit, C-terminal domain"/>
    <property type="match status" value="1"/>
</dbReference>
<dbReference type="InterPro" id="IPR009060">
    <property type="entry name" value="UBA-like_sf"/>
</dbReference>
<dbReference type="InterPro" id="IPR054109">
    <property type="entry name" value="UBA_8"/>
</dbReference>
<dbReference type="InterPro" id="IPR039310">
    <property type="entry name" value="UBALD1/2"/>
</dbReference>
<dbReference type="PANTHER" id="PTHR31993:SF5">
    <property type="entry name" value="UBA-LIKE DOMAIN-CONTAINING PROTEIN 1"/>
    <property type="match status" value="1"/>
</dbReference>
<dbReference type="PANTHER" id="PTHR31993">
    <property type="entry name" value="UBA-LIKE DOMAIN-CONTAINING PROTEIN 2"/>
    <property type="match status" value="1"/>
</dbReference>
<dbReference type="Pfam" id="PF22566">
    <property type="entry name" value="UBA_8"/>
    <property type="match status" value="1"/>
</dbReference>
<dbReference type="SUPFAM" id="SSF46934">
    <property type="entry name" value="UBA-like"/>
    <property type="match status" value="1"/>
</dbReference>
<name>UBAD1_DANRE</name>
<gene>
    <name type="primary">ubald1</name>
    <name type="synonym">fam100a</name>
    <name type="ORF">zgc:92858</name>
</gene>
<accession>Q6DGM1</accession>
<comment type="similarity">
    <text evidence="2">Belongs to the UBALD family.</text>
</comment>
<protein>
    <recommendedName>
        <fullName>UBA-like domain-containing protein 1</fullName>
    </recommendedName>
</protein>
<evidence type="ECO:0000256" key="1">
    <source>
        <dbReference type="SAM" id="MobiDB-lite"/>
    </source>
</evidence>
<evidence type="ECO:0000305" key="2"/>
<sequence length="155" mass="16787">MDELKHQVMINQFVLTAGCAADQAKQLLQAAHWQFETALSAFFQETNIPYGHHHQMMCTPANTPATPPNFPDALTMFSRLKASESFNSSSSPSMATSPPPPPVSWGMAPPMANQQSLWTQGPSAQQTHPPPGWPSAVNQQAASEQKASAAMEAER</sequence>